<name>MURC_CORGB</name>
<organism>
    <name type="scientific">Corynebacterium glutamicum (strain R)</name>
    <dbReference type="NCBI Taxonomy" id="340322"/>
    <lineage>
        <taxon>Bacteria</taxon>
        <taxon>Bacillati</taxon>
        <taxon>Actinomycetota</taxon>
        <taxon>Actinomycetes</taxon>
        <taxon>Mycobacteriales</taxon>
        <taxon>Corynebacteriaceae</taxon>
        <taxon>Corynebacterium</taxon>
    </lineage>
</organism>
<accession>A4QFM2</accession>
<comment type="function">
    <text evidence="1">Cell wall formation.</text>
</comment>
<comment type="catalytic activity">
    <reaction evidence="1">
        <text>UDP-N-acetyl-alpha-D-muramate + L-alanine + ATP = UDP-N-acetyl-alpha-D-muramoyl-L-alanine + ADP + phosphate + H(+)</text>
        <dbReference type="Rhea" id="RHEA:23372"/>
        <dbReference type="ChEBI" id="CHEBI:15378"/>
        <dbReference type="ChEBI" id="CHEBI:30616"/>
        <dbReference type="ChEBI" id="CHEBI:43474"/>
        <dbReference type="ChEBI" id="CHEBI:57972"/>
        <dbReference type="ChEBI" id="CHEBI:70757"/>
        <dbReference type="ChEBI" id="CHEBI:83898"/>
        <dbReference type="ChEBI" id="CHEBI:456216"/>
        <dbReference type="EC" id="6.3.2.8"/>
    </reaction>
</comment>
<comment type="pathway">
    <text evidence="1">Cell wall biogenesis; peptidoglycan biosynthesis.</text>
</comment>
<comment type="subcellular location">
    <subcellularLocation>
        <location evidence="1">Cytoplasm</location>
    </subcellularLocation>
</comment>
<comment type="similarity">
    <text evidence="1">Belongs to the MurCDEF family.</text>
</comment>
<protein>
    <recommendedName>
        <fullName evidence="1">UDP-N-acetylmuramate--L-alanine ligase</fullName>
        <ecNumber evidence="1">6.3.2.8</ecNumber>
    </recommendedName>
    <alternativeName>
        <fullName evidence="1">UDP-N-acetylmuramoyl-L-alanine synthetase</fullName>
    </alternativeName>
</protein>
<feature type="chain" id="PRO_1000004337" description="UDP-N-acetylmuramate--L-alanine ligase">
    <location>
        <begin position="1"/>
        <end position="486"/>
    </location>
</feature>
<feature type="binding site" evidence="1">
    <location>
        <begin position="126"/>
        <end position="132"/>
    </location>
    <ligand>
        <name>ATP</name>
        <dbReference type="ChEBI" id="CHEBI:30616"/>
    </ligand>
</feature>
<proteinExistence type="inferred from homology"/>
<reference key="1">
    <citation type="journal article" date="2007" name="Microbiology">
        <title>Comparative analysis of the Corynebacterium glutamicum group and complete genome sequence of strain R.</title>
        <authorList>
            <person name="Yukawa H."/>
            <person name="Omumasaba C.A."/>
            <person name="Nonaka H."/>
            <person name="Kos P."/>
            <person name="Okai N."/>
            <person name="Suzuki N."/>
            <person name="Suda M."/>
            <person name="Tsuge Y."/>
            <person name="Watanabe J."/>
            <person name="Ikeda Y."/>
            <person name="Vertes A.A."/>
            <person name="Inui M."/>
        </authorList>
    </citation>
    <scope>NUCLEOTIDE SEQUENCE [LARGE SCALE GENOMIC DNA]</scope>
    <source>
        <strain>R</strain>
    </source>
</reference>
<gene>
    <name evidence="1" type="primary">murC</name>
    <name type="ordered locus">cgR_2039</name>
</gene>
<evidence type="ECO:0000255" key="1">
    <source>
        <dbReference type="HAMAP-Rule" id="MF_00046"/>
    </source>
</evidence>
<keyword id="KW-0067">ATP-binding</keyword>
<keyword id="KW-0131">Cell cycle</keyword>
<keyword id="KW-0132">Cell division</keyword>
<keyword id="KW-0133">Cell shape</keyword>
<keyword id="KW-0961">Cell wall biogenesis/degradation</keyword>
<keyword id="KW-0963">Cytoplasm</keyword>
<keyword id="KW-0436">Ligase</keyword>
<keyword id="KW-0547">Nucleotide-binding</keyword>
<keyword id="KW-0573">Peptidoglycan synthesis</keyword>
<sequence length="486" mass="51199">MTTPHLDSAQDIDLSRVHLIGIGGAGMSGVARILLARGKTVTGSDAKDSRTLLPLRAVGATIAVGHAAENLELSGELPTVVVTSFAAIPQDNPELVRAREEGIPVIRRSDLLGELLEGSTQVLIAGTHGKTSTTSMSVVAMQAAGMDPSFAIGGQLNKAGTNAHHGTGEVFIAEADESDASLLRYKPNVAVVTNVEPDHLDFFKTPEAYFQVFDDFAGRITPNGKLVVCLNDPHAAELGERSVRKGIKTVGYGTADAVQAHPEVPAMATIVDSQVVAEGTRATINIDGQEVSVILQIPGDHMVLNGAAALLAGYLVGGDVDKLVEGLSDFSGVRRRFEFHGAIEGGKFNGAAIYDDYAHHPTEVTAVLSAARTRVKAAGKGRVIVAFQPHLYSRTMEFQKEFAEALSLADAAVVLEIYGAREQPVDGVSSEIITDAMTIPVVYEPNFSAVPERIAEIAGPNDIVLTMGAGSVTMLAPEILDQLQNN</sequence>
<dbReference type="EC" id="6.3.2.8" evidence="1"/>
<dbReference type="EMBL" id="AP009044">
    <property type="protein sequence ID" value="BAF55038.1"/>
    <property type="molecule type" value="Genomic_DNA"/>
</dbReference>
<dbReference type="SMR" id="A4QFM2"/>
<dbReference type="KEGG" id="cgt:cgR_2039"/>
<dbReference type="HOGENOM" id="CLU_028104_2_2_11"/>
<dbReference type="PhylomeDB" id="A4QFM2"/>
<dbReference type="UniPathway" id="UPA00219"/>
<dbReference type="Proteomes" id="UP000006698">
    <property type="component" value="Chromosome"/>
</dbReference>
<dbReference type="GO" id="GO:0005737">
    <property type="term" value="C:cytoplasm"/>
    <property type="evidence" value="ECO:0007669"/>
    <property type="project" value="UniProtKB-SubCell"/>
</dbReference>
<dbReference type="GO" id="GO:0005524">
    <property type="term" value="F:ATP binding"/>
    <property type="evidence" value="ECO:0007669"/>
    <property type="project" value="UniProtKB-UniRule"/>
</dbReference>
<dbReference type="GO" id="GO:0008763">
    <property type="term" value="F:UDP-N-acetylmuramate-L-alanine ligase activity"/>
    <property type="evidence" value="ECO:0007669"/>
    <property type="project" value="UniProtKB-UniRule"/>
</dbReference>
<dbReference type="GO" id="GO:0051301">
    <property type="term" value="P:cell division"/>
    <property type="evidence" value="ECO:0007669"/>
    <property type="project" value="UniProtKB-KW"/>
</dbReference>
<dbReference type="GO" id="GO:0071555">
    <property type="term" value="P:cell wall organization"/>
    <property type="evidence" value="ECO:0007669"/>
    <property type="project" value="UniProtKB-KW"/>
</dbReference>
<dbReference type="GO" id="GO:0009252">
    <property type="term" value="P:peptidoglycan biosynthetic process"/>
    <property type="evidence" value="ECO:0007669"/>
    <property type="project" value="UniProtKB-UniRule"/>
</dbReference>
<dbReference type="GO" id="GO:0008360">
    <property type="term" value="P:regulation of cell shape"/>
    <property type="evidence" value="ECO:0007669"/>
    <property type="project" value="UniProtKB-KW"/>
</dbReference>
<dbReference type="FunFam" id="3.90.190.20:FF:000016">
    <property type="entry name" value="UDP-N-acetylmuramate--L-alanine ligase"/>
    <property type="match status" value="1"/>
</dbReference>
<dbReference type="Gene3D" id="3.90.190.20">
    <property type="entry name" value="Mur ligase, C-terminal domain"/>
    <property type="match status" value="1"/>
</dbReference>
<dbReference type="Gene3D" id="3.40.1190.10">
    <property type="entry name" value="Mur-like, catalytic domain"/>
    <property type="match status" value="1"/>
</dbReference>
<dbReference type="Gene3D" id="3.40.50.720">
    <property type="entry name" value="NAD(P)-binding Rossmann-like Domain"/>
    <property type="match status" value="1"/>
</dbReference>
<dbReference type="HAMAP" id="MF_00046">
    <property type="entry name" value="MurC"/>
    <property type="match status" value="1"/>
</dbReference>
<dbReference type="InterPro" id="IPR036565">
    <property type="entry name" value="Mur-like_cat_sf"/>
</dbReference>
<dbReference type="InterPro" id="IPR004101">
    <property type="entry name" value="Mur_ligase_C"/>
</dbReference>
<dbReference type="InterPro" id="IPR036615">
    <property type="entry name" value="Mur_ligase_C_dom_sf"/>
</dbReference>
<dbReference type="InterPro" id="IPR013221">
    <property type="entry name" value="Mur_ligase_cen"/>
</dbReference>
<dbReference type="InterPro" id="IPR000713">
    <property type="entry name" value="Mur_ligase_N"/>
</dbReference>
<dbReference type="InterPro" id="IPR050061">
    <property type="entry name" value="MurCDEF_pg_biosynth"/>
</dbReference>
<dbReference type="InterPro" id="IPR005758">
    <property type="entry name" value="UDP-N-AcMur_Ala_ligase_MurC"/>
</dbReference>
<dbReference type="NCBIfam" id="TIGR01082">
    <property type="entry name" value="murC"/>
    <property type="match status" value="1"/>
</dbReference>
<dbReference type="PANTHER" id="PTHR43445:SF3">
    <property type="entry name" value="UDP-N-ACETYLMURAMATE--L-ALANINE LIGASE"/>
    <property type="match status" value="1"/>
</dbReference>
<dbReference type="PANTHER" id="PTHR43445">
    <property type="entry name" value="UDP-N-ACETYLMURAMATE--L-ALANINE LIGASE-RELATED"/>
    <property type="match status" value="1"/>
</dbReference>
<dbReference type="Pfam" id="PF01225">
    <property type="entry name" value="Mur_ligase"/>
    <property type="match status" value="1"/>
</dbReference>
<dbReference type="Pfam" id="PF02875">
    <property type="entry name" value="Mur_ligase_C"/>
    <property type="match status" value="1"/>
</dbReference>
<dbReference type="Pfam" id="PF08245">
    <property type="entry name" value="Mur_ligase_M"/>
    <property type="match status" value="1"/>
</dbReference>
<dbReference type="SUPFAM" id="SSF51984">
    <property type="entry name" value="MurCD N-terminal domain"/>
    <property type="match status" value="1"/>
</dbReference>
<dbReference type="SUPFAM" id="SSF53623">
    <property type="entry name" value="MurD-like peptide ligases, catalytic domain"/>
    <property type="match status" value="1"/>
</dbReference>
<dbReference type="SUPFAM" id="SSF53244">
    <property type="entry name" value="MurD-like peptide ligases, peptide-binding domain"/>
    <property type="match status" value="1"/>
</dbReference>